<gene>
    <name evidence="1" type="primary">purE</name>
    <name type="ordered locus">BMEI0296</name>
</gene>
<protein>
    <recommendedName>
        <fullName evidence="1">N5-carboxyaminoimidazole ribonucleotide mutase</fullName>
        <shortName evidence="1">N5-CAIR mutase</shortName>
        <ecNumber evidence="1">5.4.99.18</ecNumber>
    </recommendedName>
    <alternativeName>
        <fullName evidence="1">5-(carboxyamino)imidazole ribonucleotide mutase</fullName>
    </alternativeName>
</protein>
<feature type="chain" id="PRO_0000074970" description="N5-carboxyaminoimidazole ribonucleotide mutase">
    <location>
        <begin position="1"/>
        <end position="162"/>
    </location>
</feature>
<feature type="binding site" evidence="1">
    <location>
        <position position="11"/>
    </location>
    <ligand>
        <name>substrate</name>
    </ligand>
</feature>
<feature type="binding site" evidence="1">
    <location>
        <position position="14"/>
    </location>
    <ligand>
        <name>substrate</name>
    </ligand>
</feature>
<feature type="binding site" evidence="1">
    <location>
        <position position="41"/>
    </location>
    <ligand>
        <name>substrate</name>
    </ligand>
</feature>
<feature type="sequence conflict" description="In Ref. 1; AAA57002." evidence="2" ref="1">
    <original>A</original>
    <variation>R</variation>
    <location>
        <position position="55"/>
    </location>
</feature>
<feature type="sequence conflict" description="In Ref. 1; AAA57002." evidence="2" ref="1">
    <original>GA</original>
    <variation>R</variation>
    <location>
        <begin position="67"/>
        <end position="68"/>
    </location>
</feature>
<proteinExistence type="inferred from homology"/>
<sequence>MSVDVAIIMGSQSDWETMHHAADTLEALGISFDARIVSAHRTPDRLVAFAKGAKAEGFKVIIAGAGGAAHLPGMAAAMTPLPVFGVPVQSKALSGQDSLLSIVQMPAGIPVGTLAIGRAGAVNAALLAAAVLALYDEALAARLDEWRKAQTESVAERPSNEA</sequence>
<accession>P52558</accession>
<keyword id="KW-0413">Isomerase</keyword>
<keyword id="KW-0658">Purine biosynthesis</keyword>
<name>PURE_BRUME</name>
<dbReference type="EC" id="5.4.99.18" evidence="1"/>
<dbReference type="EMBL" id="U10241">
    <property type="protein sequence ID" value="AAA57002.1"/>
    <property type="molecule type" value="Unassigned_DNA"/>
</dbReference>
<dbReference type="EMBL" id="AE008917">
    <property type="protein sequence ID" value="AAL51477.1"/>
    <property type="status" value="ALT_INIT"/>
    <property type="molecule type" value="Genomic_DNA"/>
</dbReference>
<dbReference type="PIR" id="AB3289">
    <property type="entry name" value="AB3289"/>
</dbReference>
<dbReference type="RefSeq" id="WP_002964830.1">
    <property type="nucleotide sequence ID" value="NZ_GG703781.1"/>
</dbReference>
<dbReference type="SMR" id="P52558"/>
<dbReference type="GeneID" id="97533110"/>
<dbReference type="KEGG" id="bme:BMEI0296"/>
<dbReference type="KEGG" id="bmel:DK63_1137"/>
<dbReference type="PATRIC" id="fig|224914.52.peg.1201"/>
<dbReference type="eggNOG" id="COG0041">
    <property type="taxonomic scope" value="Bacteria"/>
</dbReference>
<dbReference type="PhylomeDB" id="P52558"/>
<dbReference type="UniPathway" id="UPA00074">
    <property type="reaction ID" value="UER00943"/>
</dbReference>
<dbReference type="PRO" id="PR:P52558"/>
<dbReference type="Proteomes" id="UP000000419">
    <property type="component" value="Chromosome I"/>
</dbReference>
<dbReference type="GO" id="GO:0034023">
    <property type="term" value="F:5-(carboxyamino)imidazole ribonucleotide mutase activity"/>
    <property type="evidence" value="ECO:0007669"/>
    <property type="project" value="UniProtKB-UniRule"/>
</dbReference>
<dbReference type="GO" id="GO:0006189">
    <property type="term" value="P:'de novo' IMP biosynthetic process"/>
    <property type="evidence" value="ECO:0007669"/>
    <property type="project" value="UniProtKB-UniRule"/>
</dbReference>
<dbReference type="Gene3D" id="3.40.50.1970">
    <property type="match status" value="1"/>
</dbReference>
<dbReference type="HAMAP" id="MF_01929">
    <property type="entry name" value="PurE_classI"/>
    <property type="match status" value="1"/>
</dbReference>
<dbReference type="InterPro" id="IPR033747">
    <property type="entry name" value="PurE_ClassI"/>
</dbReference>
<dbReference type="InterPro" id="IPR000031">
    <property type="entry name" value="PurE_dom"/>
</dbReference>
<dbReference type="InterPro" id="IPR024694">
    <property type="entry name" value="PurE_prokaryotes"/>
</dbReference>
<dbReference type="NCBIfam" id="TIGR01162">
    <property type="entry name" value="purE"/>
    <property type="match status" value="1"/>
</dbReference>
<dbReference type="PANTHER" id="PTHR23046:SF2">
    <property type="entry name" value="PHOSPHORIBOSYLAMINOIMIDAZOLE CARBOXYLASE"/>
    <property type="match status" value="1"/>
</dbReference>
<dbReference type="PANTHER" id="PTHR23046">
    <property type="entry name" value="PHOSPHORIBOSYLAMINOIMIDAZOLE CARBOXYLASE CATALYTIC SUBUNIT"/>
    <property type="match status" value="1"/>
</dbReference>
<dbReference type="Pfam" id="PF00731">
    <property type="entry name" value="AIRC"/>
    <property type="match status" value="1"/>
</dbReference>
<dbReference type="PIRSF" id="PIRSF001338">
    <property type="entry name" value="AIR_carboxylase"/>
    <property type="match status" value="1"/>
</dbReference>
<dbReference type="SMART" id="SM01001">
    <property type="entry name" value="AIRC"/>
    <property type="match status" value="1"/>
</dbReference>
<dbReference type="SUPFAM" id="SSF52255">
    <property type="entry name" value="N5-CAIR mutase (phosphoribosylaminoimidazole carboxylase, PurE)"/>
    <property type="match status" value="1"/>
</dbReference>
<reference key="1">
    <citation type="submission" date="1994-12" db="EMBL/GenBank/DDBJ databases">
        <title>Molecular cloning and genetic characterization of the purEK operon of Brucella melitensis strain 16M.</title>
        <authorList>
            <person name="Warren R."/>
            <person name="Hoover D."/>
            <person name="Hadfield T."/>
            <person name="Drazek S."/>
        </authorList>
    </citation>
    <scope>NUCLEOTIDE SEQUENCE [GENOMIC DNA]</scope>
    <source>
        <strain>ATCC 23456 / CCUG 17765 / NCTC 10094 / 16M</strain>
    </source>
</reference>
<reference key="2">
    <citation type="journal article" date="2002" name="Proc. Natl. Acad. Sci. U.S.A.">
        <title>The genome sequence of the facultative intracellular pathogen Brucella melitensis.</title>
        <authorList>
            <person name="DelVecchio V.G."/>
            <person name="Kapatral V."/>
            <person name="Redkar R.J."/>
            <person name="Patra G."/>
            <person name="Mujer C."/>
            <person name="Los T."/>
            <person name="Ivanova N."/>
            <person name="Anderson I."/>
            <person name="Bhattacharyya A."/>
            <person name="Lykidis A."/>
            <person name="Reznik G."/>
            <person name="Jablonski L."/>
            <person name="Larsen N."/>
            <person name="D'Souza M."/>
            <person name="Bernal A."/>
            <person name="Mazur M."/>
            <person name="Goltsman E."/>
            <person name="Selkov E."/>
            <person name="Elzer P.H."/>
            <person name="Hagius S."/>
            <person name="O'Callaghan D."/>
            <person name="Letesson J.-J."/>
            <person name="Haselkorn R."/>
            <person name="Kyrpides N.C."/>
            <person name="Overbeek R."/>
        </authorList>
    </citation>
    <scope>NUCLEOTIDE SEQUENCE [LARGE SCALE GENOMIC DNA]</scope>
    <source>
        <strain>ATCC 23456 / CCUG 17765 / NCTC 10094 / 16M</strain>
    </source>
</reference>
<organism>
    <name type="scientific">Brucella melitensis biotype 1 (strain ATCC 23456 / CCUG 17765 / NCTC 10094 / 16M)</name>
    <dbReference type="NCBI Taxonomy" id="224914"/>
    <lineage>
        <taxon>Bacteria</taxon>
        <taxon>Pseudomonadati</taxon>
        <taxon>Pseudomonadota</taxon>
        <taxon>Alphaproteobacteria</taxon>
        <taxon>Hyphomicrobiales</taxon>
        <taxon>Brucellaceae</taxon>
        <taxon>Brucella/Ochrobactrum group</taxon>
        <taxon>Brucella</taxon>
    </lineage>
</organism>
<comment type="function">
    <text evidence="1">Catalyzes the conversion of N5-carboxyaminoimidazole ribonucleotide (N5-CAIR) to 4-carboxy-5-aminoimidazole ribonucleotide (CAIR).</text>
</comment>
<comment type="catalytic activity">
    <reaction evidence="1">
        <text>5-carboxyamino-1-(5-phospho-D-ribosyl)imidazole + H(+) = 5-amino-1-(5-phospho-D-ribosyl)imidazole-4-carboxylate</text>
        <dbReference type="Rhea" id="RHEA:13193"/>
        <dbReference type="ChEBI" id="CHEBI:15378"/>
        <dbReference type="ChEBI" id="CHEBI:58730"/>
        <dbReference type="ChEBI" id="CHEBI:77657"/>
        <dbReference type="EC" id="5.4.99.18"/>
    </reaction>
</comment>
<comment type="pathway">
    <text evidence="1">Purine metabolism; IMP biosynthesis via de novo pathway; 5-amino-1-(5-phospho-D-ribosyl)imidazole-4-carboxylate from 5-amino-1-(5-phospho-D-ribosyl)imidazole (N5-CAIR route): step 2/2.</text>
</comment>
<comment type="similarity">
    <text evidence="1">Belongs to the AIR carboxylase family. Class I subfamily.</text>
</comment>
<comment type="sequence caution" evidence="2">
    <conflict type="erroneous initiation">
        <sequence resource="EMBL-CDS" id="AAL51477"/>
    </conflict>
</comment>
<evidence type="ECO:0000255" key="1">
    <source>
        <dbReference type="HAMAP-Rule" id="MF_01929"/>
    </source>
</evidence>
<evidence type="ECO:0000305" key="2"/>